<keyword id="KW-0002">3D-structure</keyword>
<keyword id="KW-0025">Alternative splicing</keyword>
<keyword id="KW-0067">ATP-binding</keyword>
<keyword id="KW-0112">Calmodulin-binding</keyword>
<keyword id="KW-0119">Carbohydrate metabolism</keyword>
<keyword id="KW-0225">Disease variant</keyword>
<keyword id="KW-0321">Glycogen metabolism</keyword>
<keyword id="KW-0322">Glycogen storage disease</keyword>
<keyword id="KW-0418">Kinase</keyword>
<keyword id="KW-0547">Nucleotide-binding</keyword>
<keyword id="KW-0597">Phosphoprotein</keyword>
<keyword id="KW-1267">Proteomics identification</keyword>
<keyword id="KW-1185">Reference proteome</keyword>
<keyword id="KW-0723">Serine/threonine-protein kinase</keyword>
<keyword id="KW-0808">Transferase</keyword>
<gene>
    <name type="primary">PHKG2</name>
</gene>
<organism>
    <name type="scientific">Homo sapiens</name>
    <name type="common">Human</name>
    <dbReference type="NCBI Taxonomy" id="9606"/>
    <lineage>
        <taxon>Eukaryota</taxon>
        <taxon>Metazoa</taxon>
        <taxon>Chordata</taxon>
        <taxon>Craniata</taxon>
        <taxon>Vertebrata</taxon>
        <taxon>Euteleostomi</taxon>
        <taxon>Mammalia</taxon>
        <taxon>Eutheria</taxon>
        <taxon>Euarchontoglires</taxon>
        <taxon>Primates</taxon>
        <taxon>Haplorrhini</taxon>
        <taxon>Catarrhini</taxon>
        <taxon>Hominidae</taxon>
        <taxon>Homo</taxon>
    </lineage>
</organism>
<protein>
    <recommendedName>
        <fullName>Phosphorylase b kinase gamma catalytic chain, liver/testis isoform</fullName>
        <shortName>PHK-gamma-LT</shortName>
        <shortName>PHK-gamma-T</shortName>
        <ecNumber evidence="8">2.7.11.19</ecNumber>
    </recommendedName>
    <alternativeName>
        <fullName>PSK-C3</fullName>
    </alternativeName>
    <alternativeName>
        <fullName>Phosphorylase kinase subunit gamma-2</fullName>
    </alternativeName>
</protein>
<reference key="1">
    <citation type="journal article" date="1989" name="Mol. Endocrinol.">
        <title>Messenger ribonucleic acid encoding an apparent isoform of phosphorylase kinase catalytic subunit is abundant in the adult testis.</title>
        <authorList>
            <person name="Hanks S.K."/>
        </authorList>
    </citation>
    <scope>NUCLEOTIDE SEQUENCE [MRNA] (ISOFORM 1)</scope>
</reference>
<reference key="2">
    <citation type="journal article" date="1998" name="Hum. Mol. Genet.">
        <title>Liver glycogenosis due to phosphorylase kinase deficiency: PHKG2 gene structure and mutations associated with cirrhosis.</title>
        <authorList>
            <person name="Burwinkel B."/>
            <person name="Shiomi S."/>
            <person name="Al Zaben A."/>
            <person name="Kilimann M.W."/>
        </authorList>
    </citation>
    <scope>NUCLEOTIDE SEQUENCE [GENOMIC DNA] (ISOFORM 1)</scope>
    <source>
        <tissue>Liver</tissue>
    </source>
</reference>
<reference key="3">
    <citation type="journal article" date="2004" name="Nat. Genet.">
        <title>Complete sequencing and characterization of 21,243 full-length human cDNAs.</title>
        <authorList>
            <person name="Ota T."/>
            <person name="Suzuki Y."/>
            <person name="Nishikawa T."/>
            <person name="Otsuki T."/>
            <person name="Sugiyama T."/>
            <person name="Irie R."/>
            <person name="Wakamatsu A."/>
            <person name="Hayashi K."/>
            <person name="Sato H."/>
            <person name="Nagai K."/>
            <person name="Kimura K."/>
            <person name="Makita H."/>
            <person name="Sekine M."/>
            <person name="Obayashi M."/>
            <person name="Nishi T."/>
            <person name="Shibahara T."/>
            <person name="Tanaka T."/>
            <person name="Ishii S."/>
            <person name="Yamamoto J."/>
            <person name="Saito K."/>
            <person name="Kawai Y."/>
            <person name="Isono Y."/>
            <person name="Nakamura Y."/>
            <person name="Nagahari K."/>
            <person name="Murakami K."/>
            <person name="Yasuda T."/>
            <person name="Iwayanagi T."/>
            <person name="Wagatsuma M."/>
            <person name="Shiratori A."/>
            <person name="Sudo H."/>
            <person name="Hosoiri T."/>
            <person name="Kaku Y."/>
            <person name="Kodaira H."/>
            <person name="Kondo H."/>
            <person name="Sugawara M."/>
            <person name="Takahashi M."/>
            <person name="Kanda K."/>
            <person name="Yokoi T."/>
            <person name="Furuya T."/>
            <person name="Kikkawa E."/>
            <person name="Omura Y."/>
            <person name="Abe K."/>
            <person name="Kamihara K."/>
            <person name="Katsuta N."/>
            <person name="Sato K."/>
            <person name="Tanikawa M."/>
            <person name="Yamazaki M."/>
            <person name="Ninomiya K."/>
            <person name="Ishibashi T."/>
            <person name="Yamashita H."/>
            <person name="Murakawa K."/>
            <person name="Fujimori K."/>
            <person name="Tanai H."/>
            <person name="Kimata M."/>
            <person name="Watanabe M."/>
            <person name="Hiraoka S."/>
            <person name="Chiba Y."/>
            <person name="Ishida S."/>
            <person name="Ono Y."/>
            <person name="Takiguchi S."/>
            <person name="Watanabe S."/>
            <person name="Yosida M."/>
            <person name="Hotuta T."/>
            <person name="Kusano J."/>
            <person name="Kanehori K."/>
            <person name="Takahashi-Fujii A."/>
            <person name="Hara H."/>
            <person name="Tanase T.-O."/>
            <person name="Nomura Y."/>
            <person name="Togiya S."/>
            <person name="Komai F."/>
            <person name="Hara R."/>
            <person name="Takeuchi K."/>
            <person name="Arita M."/>
            <person name="Imose N."/>
            <person name="Musashino K."/>
            <person name="Yuuki H."/>
            <person name="Oshima A."/>
            <person name="Sasaki N."/>
            <person name="Aotsuka S."/>
            <person name="Yoshikawa Y."/>
            <person name="Matsunawa H."/>
            <person name="Ichihara T."/>
            <person name="Shiohata N."/>
            <person name="Sano S."/>
            <person name="Moriya S."/>
            <person name="Momiyama H."/>
            <person name="Satoh N."/>
            <person name="Takami S."/>
            <person name="Terashima Y."/>
            <person name="Suzuki O."/>
            <person name="Nakagawa S."/>
            <person name="Senoh A."/>
            <person name="Mizoguchi H."/>
            <person name="Goto Y."/>
            <person name="Shimizu F."/>
            <person name="Wakebe H."/>
            <person name="Hishigaki H."/>
            <person name="Watanabe T."/>
            <person name="Sugiyama A."/>
            <person name="Takemoto M."/>
            <person name="Kawakami B."/>
            <person name="Yamazaki M."/>
            <person name="Watanabe K."/>
            <person name="Kumagai A."/>
            <person name="Itakura S."/>
            <person name="Fukuzumi Y."/>
            <person name="Fujimori Y."/>
            <person name="Komiyama M."/>
            <person name="Tashiro H."/>
            <person name="Tanigami A."/>
            <person name="Fujiwara T."/>
            <person name="Ono T."/>
            <person name="Yamada K."/>
            <person name="Fujii Y."/>
            <person name="Ozaki K."/>
            <person name="Hirao M."/>
            <person name="Ohmori Y."/>
            <person name="Kawabata A."/>
            <person name="Hikiji T."/>
            <person name="Kobatake N."/>
            <person name="Inagaki H."/>
            <person name="Ikema Y."/>
            <person name="Okamoto S."/>
            <person name="Okitani R."/>
            <person name="Kawakami T."/>
            <person name="Noguchi S."/>
            <person name="Itoh T."/>
            <person name="Shigeta K."/>
            <person name="Senba T."/>
            <person name="Matsumura K."/>
            <person name="Nakajima Y."/>
            <person name="Mizuno T."/>
            <person name="Morinaga M."/>
            <person name="Sasaki M."/>
            <person name="Togashi T."/>
            <person name="Oyama M."/>
            <person name="Hata H."/>
            <person name="Watanabe M."/>
            <person name="Komatsu T."/>
            <person name="Mizushima-Sugano J."/>
            <person name="Satoh T."/>
            <person name="Shirai Y."/>
            <person name="Takahashi Y."/>
            <person name="Nakagawa K."/>
            <person name="Okumura K."/>
            <person name="Nagase T."/>
            <person name="Nomura N."/>
            <person name="Kikuchi H."/>
            <person name="Masuho Y."/>
            <person name="Yamashita R."/>
            <person name="Nakai K."/>
            <person name="Yada T."/>
            <person name="Nakamura Y."/>
            <person name="Ohara O."/>
            <person name="Isogai T."/>
            <person name="Sugano S."/>
        </authorList>
    </citation>
    <scope>NUCLEOTIDE SEQUENCE [LARGE SCALE MRNA] (ISOFORMS 1 AND 2)</scope>
    <source>
        <tissue>Cerebellum</tissue>
    </source>
</reference>
<reference key="4">
    <citation type="journal article" date="2004" name="Nature">
        <title>The sequence and analysis of duplication-rich human chromosome 16.</title>
        <authorList>
            <person name="Martin J."/>
            <person name="Han C."/>
            <person name="Gordon L.A."/>
            <person name="Terry A."/>
            <person name="Prabhakar S."/>
            <person name="She X."/>
            <person name="Xie G."/>
            <person name="Hellsten U."/>
            <person name="Chan Y.M."/>
            <person name="Altherr M."/>
            <person name="Couronne O."/>
            <person name="Aerts A."/>
            <person name="Bajorek E."/>
            <person name="Black S."/>
            <person name="Blumer H."/>
            <person name="Branscomb E."/>
            <person name="Brown N.C."/>
            <person name="Bruno W.J."/>
            <person name="Buckingham J.M."/>
            <person name="Callen D.F."/>
            <person name="Campbell C.S."/>
            <person name="Campbell M.L."/>
            <person name="Campbell E.W."/>
            <person name="Caoile C."/>
            <person name="Challacombe J.F."/>
            <person name="Chasteen L.A."/>
            <person name="Chertkov O."/>
            <person name="Chi H.C."/>
            <person name="Christensen M."/>
            <person name="Clark L.M."/>
            <person name="Cohn J.D."/>
            <person name="Denys M."/>
            <person name="Detter J.C."/>
            <person name="Dickson M."/>
            <person name="Dimitrijevic-Bussod M."/>
            <person name="Escobar J."/>
            <person name="Fawcett J.J."/>
            <person name="Flowers D."/>
            <person name="Fotopulos D."/>
            <person name="Glavina T."/>
            <person name="Gomez M."/>
            <person name="Gonzales E."/>
            <person name="Goodstein D."/>
            <person name="Goodwin L.A."/>
            <person name="Grady D.L."/>
            <person name="Grigoriev I."/>
            <person name="Groza M."/>
            <person name="Hammon N."/>
            <person name="Hawkins T."/>
            <person name="Haydu L."/>
            <person name="Hildebrand C.E."/>
            <person name="Huang W."/>
            <person name="Israni S."/>
            <person name="Jett J."/>
            <person name="Jewett P.B."/>
            <person name="Kadner K."/>
            <person name="Kimball H."/>
            <person name="Kobayashi A."/>
            <person name="Krawczyk M.-C."/>
            <person name="Leyba T."/>
            <person name="Longmire J.L."/>
            <person name="Lopez F."/>
            <person name="Lou Y."/>
            <person name="Lowry S."/>
            <person name="Ludeman T."/>
            <person name="Manohar C.F."/>
            <person name="Mark G.A."/>
            <person name="McMurray K.L."/>
            <person name="Meincke L.J."/>
            <person name="Morgan J."/>
            <person name="Moyzis R.K."/>
            <person name="Mundt M.O."/>
            <person name="Munk A.C."/>
            <person name="Nandkeshwar R.D."/>
            <person name="Pitluck S."/>
            <person name="Pollard M."/>
            <person name="Predki P."/>
            <person name="Parson-Quintana B."/>
            <person name="Ramirez L."/>
            <person name="Rash S."/>
            <person name="Retterer J."/>
            <person name="Ricke D.O."/>
            <person name="Robinson D.L."/>
            <person name="Rodriguez A."/>
            <person name="Salamov A."/>
            <person name="Saunders E.H."/>
            <person name="Scott D."/>
            <person name="Shough T."/>
            <person name="Stallings R.L."/>
            <person name="Stalvey M."/>
            <person name="Sutherland R.D."/>
            <person name="Tapia R."/>
            <person name="Tesmer J.G."/>
            <person name="Thayer N."/>
            <person name="Thompson L.S."/>
            <person name="Tice H."/>
            <person name="Torney D.C."/>
            <person name="Tran-Gyamfi M."/>
            <person name="Tsai M."/>
            <person name="Ulanovsky L.E."/>
            <person name="Ustaszewska A."/>
            <person name="Vo N."/>
            <person name="White P.S."/>
            <person name="Williams A.L."/>
            <person name="Wills P.L."/>
            <person name="Wu J.-R."/>
            <person name="Wu K."/>
            <person name="Yang J."/>
            <person name="DeJong P."/>
            <person name="Bruce D."/>
            <person name="Doggett N.A."/>
            <person name="Deaven L."/>
            <person name="Schmutz J."/>
            <person name="Grimwood J."/>
            <person name="Richardson P."/>
            <person name="Rokhsar D.S."/>
            <person name="Eichler E.E."/>
            <person name="Gilna P."/>
            <person name="Lucas S.M."/>
            <person name="Myers R.M."/>
            <person name="Rubin E.M."/>
            <person name="Pennacchio L.A."/>
        </authorList>
    </citation>
    <scope>NUCLEOTIDE SEQUENCE [LARGE SCALE GENOMIC DNA]</scope>
</reference>
<reference key="5">
    <citation type="journal article" date="2004" name="Genome Res.">
        <title>The status, quality, and expansion of the NIH full-length cDNA project: the Mammalian Gene Collection (MGC).</title>
        <authorList>
            <consortium name="The MGC Project Team"/>
        </authorList>
    </citation>
    <scope>NUCLEOTIDE SEQUENCE [LARGE SCALE MRNA] (ISOFORM 1)</scope>
    <source>
        <tissue>Placenta</tissue>
    </source>
</reference>
<reference key="6">
    <citation type="journal article" date="1987" name="Proc. Natl. Acad. Sci. U.S.A.">
        <title>Homology probing: identification of cDNA clones encoding members of the protein-serine kinase family.</title>
        <authorList>
            <person name="Hanks S.K."/>
        </authorList>
    </citation>
    <scope>NUCLEOTIDE SEQUENCE [MRNA] OF 129-273</scope>
</reference>
<reference key="7">
    <citation type="journal article" date="1997" name="Biochem. Biophys. Res. Commun.">
        <title>Autosomal recessive liver phosphorylase kinase deficiency caused by a novel splice-site mutation in the gene encoding the liver gamma subunit (PHKG2).</title>
        <authorList>
            <person name="van Beurden E.A."/>
            <person name="de Graaf M."/>
            <person name="Wendel U."/>
            <person name="Gitzelmann R."/>
            <person name="Berger R."/>
            <person name="van den Berg I.E."/>
        </authorList>
    </citation>
    <scope>INVOLVEMENT IN GSD9C</scope>
</reference>
<reference key="8">
    <citation type="journal article" date="1999" name="Front. Biosci.">
        <title>Phosphorylase kinase: the complexity of its regulation is reflected in the complexity of its structure.</title>
        <authorList>
            <person name="Brushia R.J."/>
            <person name="Walsh D.A."/>
        </authorList>
    </citation>
    <scope>FUNCTION</scope>
    <scope>STRUCTURE</scope>
</reference>
<reference key="9">
    <citation type="journal article" date="2011" name="BMC Syst. Biol.">
        <title>Initial characterization of the human central proteome.</title>
        <authorList>
            <person name="Burkard T.R."/>
            <person name="Planyavsky M."/>
            <person name="Kaupe I."/>
            <person name="Breitwieser F.P."/>
            <person name="Buerckstuemmer T."/>
            <person name="Bennett K.L."/>
            <person name="Superti-Furga G."/>
            <person name="Colinge J."/>
        </authorList>
    </citation>
    <scope>IDENTIFICATION BY MASS SPECTROMETRY [LARGE SCALE ANALYSIS]</scope>
</reference>
<reference key="10">
    <citation type="journal article" date="2013" name="J. Proteome Res.">
        <title>Toward a comprehensive characterization of a human cancer cell phosphoproteome.</title>
        <authorList>
            <person name="Zhou H."/>
            <person name="Di Palma S."/>
            <person name="Preisinger C."/>
            <person name="Peng M."/>
            <person name="Polat A.N."/>
            <person name="Heck A.J."/>
            <person name="Mohammed S."/>
        </authorList>
    </citation>
    <scope>PHOSPHORYLATION [LARGE SCALE ANALYSIS] AT SER-345</scope>
    <scope>IDENTIFICATION BY MASS SPECTROMETRY [LARGE SCALE ANALYSIS]</scope>
    <source>
        <tissue>Erythroleukemia</tissue>
    </source>
</reference>
<reference key="11">
    <citation type="journal article" date="2014" name="J. Proteomics">
        <title>An enzyme assisted RP-RPLC approach for in-depth analysis of human liver phosphoproteome.</title>
        <authorList>
            <person name="Bian Y."/>
            <person name="Song C."/>
            <person name="Cheng K."/>
            <person name="Dong M."/>
            <person name="Wang F."/>
            <person name="Huang J."/>
            <person name="Sun D."/>
            <person name="Wang L."/>
            <person name="Ye M."/>
            <person name="Zou H."/>
        </authorList>
    </citation>
    <scope>IDENTIFICATION BY MASS SPECTROMETRY [LARGE SCALE ANALYSIS]</scope>
    <source>
        <tissue>Liver</tissue>
    </source>
</reference>
<reference key="12">
    <citation type="submission" date="2011-02" db="PDB data bank">
        <title>Structure of human phosphorylase kinase, gamma 2.</title>
        <authorList>
            <consortium name="Structural genomics consortium (SGC)"/>
        </authorList>
    </citation>
    <scope>X-RAY CRYSTALLOGRAPHY (2.5 ANGSTROMS) OF 6-293 IN COMPLEX WITH INHIBITOR</scope>
</reference>
<reference key="13">
    <citation type="journal article" date="1996" name="Nat. Genet.">
        <title>Mutations in the testis/liver isoform of the phosphorylase kinase gamma subunit (PHKG2) cause autosomal liver glycogenosis in the gsd rat and in humans.</title>
        <authorList>
            <person name="Maichele A.J."/>
            <person name="Burwinkel B."/>
            <person name="Maire I."/>
            <person name="Sovik O."/>
            <person name="Kilimann M.W."/>
        </authorList>
    </citation>
    <scope>VARIANTS GSD9C GLU-106 AND GLU-189</scope>
</reference>
<reference key="14">
    <citation type="journal article" date="2003" name="Pediatr. Res.">
        <title>Severe phenotype of phosphorylase kinase-deficient liver glycogenosis with mutations in the PHKG2 gene.</title>
        <authorList>
            <person name="Burwinkel B."/>
            <person name="Rootwelt T."/>
            <person name="Kvittingen E.A."/>
            <person name="Chakraborty P.K."/>
            <person name="Kilimann M.W."/>
        </authorList>
    </citation>
    <scope>VARIANTS GSD9C LYS-157 AND ASN-215</scope>
</reference>
<reference key="15">
    <citation type="journal article" date="2007" name="Nature">
        <title>Patterns of somatic mutation in human cancer genomes.</title>
        <authorList>
            <person name="Greenman C."/>
            <person name="Stephens P."/>
            <person name="Smith R."/>
            <person name="Dalgliesh G.L."/>
            <person name="Hunter C."/>
            <person name="Bignell G."/>
            <person name="Davies H."/>
            <person name="Teague J."/>
            <person name="Butler A."/>
            <person name="Stevens C."/>
            <person name="Edkins S."/>
            <person name="O'Meara S."/>
            <person name="Vastrik I."/>
            <person name="Schmidt E.E."/>
            <person name="Avis T."/>
            <person name="Barthorpe S."/>
            <person name="Bhamra G."/>
            <person name="Buck G."/>
            <person name="Choudhury B."/>
            <person name="Clements J."/>
            <person name="Cole J."/>
            <person name="Dicks E."/>
            <person name="Forbes S."/>
            <person name="Gray K."/>
            <person name="Halliday K."/>
            <person name="Harrison R."/>
            <person name="Hills K."/>
            <person name="Hinton J."/>
            <person name="Jenkinson A."/>
            <person name="Jones D."/>
            <person name="Menzies A."/>
            <person name="Mironenko T."/>
            <person name="Perry J."/>
            <person name="Raine K."/>
            <person name="Richardson D."/>
            <person name="Shepherd R."/>
            <person name="Small A."/>
            <person name="Tofts C."/>
            <person name="Varian J."/>
            <person name="Webb T."/>
            <person name="West S."/>
            <person name="Widaa S."/>
            <person name="Yates A."/>
            <person name="Cahill D.P."/>
            <person name="Louis D.N."/>
            <person name="Goldstraw P."/>
            <person name="Nicholson A.G."/>
            <person name="Brasseur F."/>
            <person name="Looijenga L."/>
            <person name="Weber B.L."/>
            <person name="Chiew Y.-E."/>
            <person name="DeFazio A."/>
            <person name="Greaves M.F."/>
            <person name="Green A.R."/>
            <person name="Campbell P."/>
            <person name="Birney E."/>
            <person name="Easton D.F."/>
            <person name="Chenevix-Trench G."/>
            <person name="Tan M.-H."/>
            <person name="Khoo S.K."/>
            <person name="Teh B.T."/>
            <person name="Yuen S.T."/>
            <person name="Leung S.Y."/>
            <person name="Wooster R."/>
            <person name="Futreal P.A."/>
            <person name="Stratton M.R."/>
        </authorList>
    </citation>
    <scope>VARIANT [LARGE SCALE ANALYSIS] THR-317</scope>
</reference>
<reference key="16">
    <citation type="journal article" date="2022" name="BMC Pediatr.">
        <title>A very rare case report of glycogen storage disease type IXc with novel PHKG2 variants.</title>
        <authorList>
            <person name="Shao Y."/>
            <person name="Li T."/>
            <person name="Jiang M."/>
            <person name="Xu J."/>
            <person name="Huang Y."/>
            <person name="Li X."/>
            <person name="Zheng R."/>
            <person name="Liu L."/>
        </authorList>
    </citation>
    <scope>VARIANT GSD9C SER-233</scope>
    <scope>CHARACTERIZATION OF VARIANTS GSD9C ASN-215 AND SER-233</scope>
    <scope>VARIANT GLY-253</scope>
    <scope>CHARACTERIZATION OF VARIANT GLY-253</scope>
    <scope>FUNCTION</scope>
    <scope>CATALYTIC ACTIVITY</scope>
</reference>
<name>PHKG2_HUMAN</name>
<sequence length="406" mass="46442">MTLDVGPEDELPDWAAAKEFYQKYDPKDVIGRGVSSVVRRCVHRATGHEFAVKIMEVTAERLSPEQLEEVREATRRETHILRQVAGHPHIITLIDSYESSSFMFLVFDLMRKGELFDYLTEKVALSEKETRSIMRSLLEAVSFLHANNIVHRDLKPENILLDDNMQIRLSDFGFSCHLEPGEKLRELCGTPGYLAPEILKCSMDETHPGYGKEVDLWACGVILFTLLAGSPPFWHRRQILMLRMIMEGQYQFSSPEWDDRSSTVKDLISRLLQVDPEARLTAEQALQHPFFERCEGSQPWNLTPRQRFRVAVWTVLAAGRVALSTHRVRPLTKNALLRDPYALRSVRHLIDNCAFRLYGHWVKKGEQQNRAALFQHRPPGPFPIMGPEEEGDSAAITEDEAVLVLG</sequence>
<dbReference type="EC" id="2.7.11.19" evidence="8"/>
<dbReference type="EMBL" id="M31606">
    <property type="protein sequence ID" value="AAA36442.1"/>
    <property type="molecule type" value="mRNA"/>
</dbReference>
<dbReference type="EMBL" id="Y11950">
    <property type="protein sequence ID" value="CAA72694.1"/>
    <property type="molecule type" value="Genomic_DNA"/>
</dbReference>
<dbReference type="EMBL" id="Y11951">
    <property type="protein sequence ID" value="CAA72694.1"/>
    <property type="status" value="JOINED"/>
    <property type="molecule type" value="Genomic_DNA"/>
</dbReference>
<dbReference type="EMBL" id="AK289492">
    <property type="protein sequence ID" value="BAF82181.1"/>
    <property type="molecule type" value="mRNA"/>
</dbReference>
<dbReference type="EMBL" id="AK293551">
    <property type="protein sequence ID" value="BAG57028.1"/>
    <property type="molecule type" value="mRNA"/>
</dbReference>
<dbReference type="EMBL" id="AC106886">
    <property type="status" value="NOT_ANNOTATED_CDS"/>
    <property type="molecule type" value="Genomic_DNA"/>
</dbReference>
<dbReference type="EMBL" id="BC002541">
    <property type="protein sequence ID" value="AAH02541.1"/>
    <property type="molecule type" value="mRNA"/>
</dbReference>
<dbReference type="EMBL" id="M14503">
    <property type="protein sequence ID" value="AAA36518.1"/>
    <property type="molecule type" value="mRNA"/>
</dbReference>
<dbReference type="CCDS" id="CCDS10690.1">
    <molecule id="P15735-1"/>
</dbReference>
<dbReference type="CCDS" id="CCDS54002.1">
    <molecule id="P15735-2"/>
</dbReference>
<dbReference type="PIR" id="A40069">
    <property type="entry name" value="KIHUCT"/>
</dbReference>
<dbReference type="RefSeq" id="NP_000285.1">
    <molecule id="P15735-1"/>
    <property type="nucleotide sequence ID" value="NM_000294.3"/>
</dbReference>
<dbReference type="RefSeq" id="NP_001165903.1">
    <molecule id="P15735-2"/>
    <property type="nucleotide sequence ID" value="NM_001172432.2"/>
</dbReference>
<dbReference type="PDB" id="2Y7J">
    <property type="method" value="X-ray"/>
    <property type="resolution" value="2.50 A"/>
    <property type="chains" value="A/B/C/D=6-293"/>
</dbReference>
<dbReference type="PDBsum" id="2Y7J"/>
<dbReference type="SMR" id="P15735"/>
<dbReference type="BioGRID" id="111279">
    <property type="interactions" value="96"/>
</dbReference>
<dbReference type="ComplexPortal" id="CPX-9581">
    <property type="entry name" value="Phosphorylase kinase, liver variant"/>
</dbReference>
<dbReference type="FunCoup" id="P15735">
    <property type="interactions" value="2565"/>
</dbReference>
<dbReference type="IntAct" id="P15735">
    <property type="interactions" value="68"/>
</dbReference>
<dbReference type="MINT" id="P15735"/>
<dbReference type="STRING" id="9606.ENSP00000455607"/>
<dbReference type="BindingDB" id="P15735"/>
<dbReference type="ChEMBL" id="CHEMBL2349"/>
<dbReference type="DrugCentral" id="P15735"/>
<dbReference type="GuidetoPHARMACOLOGY" id="2147"/>
<dbReference type="GlyGen" id="P15735">
    <property type="glycosylation" value="1 site, 1 O-linked glycan (1 site)"/>
</dbReference>
<dbReference type="iPTMnet" id="P15735"/>
<dbReference type="PhosphoSitePlus" id="P15735"/>
<dbReference type="BioMuta" id="PHKG2"/>
<dbReference type="DMDM" id="125536"/>
<dbReference type="CPTAC" id="CPTAC-2839"/>
<dbReference type="CPTAC" id="non-CPTAC-3114"/>
<dbReference type="CPTAC" id="non-CPTAC-5687"/>
<dbReference type="CPTAC" id="non-CPTAC-5688"/>
<dbReference type="jPOST" id="P15735"/>
<dbReference type="MassIVE" id="P15735"/>
<dbReference type="PaxDb" id="9606-ENSP00000455607"/>
<dbReference type="PeptideAtlas" id="P15735"/>
<dbReference type="ProteomicsDB" id="53208">
    <molecule id="P15735-1"/>
</dbReference>
<dbReference type="ProteomicsDB" id="53209">
    <molecule id="P15735-2"/>
</dbReference>
<dbReference type="Pumba" id="P15735"/>
<dbReference type="Antibodypedia" id="13792">
    <property type="antibodies" value="408 antibodies from 31 providers"/>
</dbReference>
<dbReference type="DNASU" id="5261"/>
<dbReference type="Ensembl" id="ENST00000424889.7">
    <molecule id="P15735-2"/>
    <property type="protein sequence ID" value="ENSP00000388571.3"/>
    <property type="gene ID" value="ENSG00000156873.16"/>
</dbReference>
<dbReference type="Ensembl" id="ENST00000563588.6">
    <molecule id="P15735-1"/>
    <property type="protein sequence ID" value="ENSP00000455607.1"/>
    <property type="gene ID" value="ENSG00000156873.16"/>
</dbReference>
<dbReference type="GeneID" id="5261"/>
<dbReference type="KEGG" id="hsa:5261"/>
<dbReference type="MANE-Select" id="ENST00000563588.6">
    <property type="protein sequence ID" value="ENSP00000455607.1"/>
    <property type="RefSeq nucleotide sequence ID" value="NM_000294.3"/>
    <property type="RefSeq protein sequence ID" value="NP_000285.1"/>
</dbReference>
<dbReference type="UCSC" id="uc021tgo.3">
    <molecule id="P15735-1"/>
    <property type="organism name" value="human"/>
</dbReference>
<dbReference type="AGR" id="HGNC:8931"/>
<dbReference type="CTD" id="5261"/>
<dbReference type="DisGeNET" id="5261"/>
<dbReference type="GeneCards" id="PHKG2"/>
<dbReference type="GeneReviews" id="PHKG2"/>
<dbReference type="HGNC" id="HGNC:8931">
    <property type="gene designation" value="PHKG2"/>
</dbReference>
<dbReference type="HPA" id="ENSG00000156873">
    <property type="expression patterns" value="Tissue enriched (testis)"/>
</dbReference>
<dbReference type="MalaCards" id="PHKG2"/>
<dbReference type="MIM" id="172471">
    <property type="type" value="gene"/>
</dbReference>
<dbReference type="MIM" id="613027">
    <property type="type" value="phenotype"/>
</dbReference>
<dbReference type="neXtProt" id="NX_P15735"/>
<dbReference type="OpenTargets" id="ENSG00000156873"/>
<dbReference type="Orphanet" id="264580">
    <property type="disease" value="Glycogen storage disease due to liver phosphorylase kinase deficiency"/>
</dbReference>
<dbReference type="PharmGKB" id="PA33272"/>
<dbReference type="VEuPathDB" id="HostDB:ENSG00000156873"/>
<dbReference type="eggNOG" id="KOG0599">
    <property type="taxonomic scope" value="Eukaryota"/>
</dbReference>
<dbReference type="GeneTree" id="ENSGT00940000160435"/>
<dbReference type="InParanoid" id="P15735"/>
<dbReference type="OrthoDB" id="419455at2759"/>
<dbReference type="PAN-GO" id="P15735">
    <property type="GO annotations" value="0 GO annotations based on evolutionary models"/>
</dbReference>
<dbReference type="PhylomeDB" id="P15735"/>
<dbReference type="TreeFam" id="TF320349"/>
<dbReference type="BioCyc" id="MetaCyc:HS08155-MONOMER"/>
<dbReference type="BRENDA" id="2.7.11.19">
    <property type="organism ID" value="2681"/>
</dbReference>
<dbReference type="PathwayCommons" id="P15735"/>
<dbReference type="Reactome" id="R-HSA-70221">
    <property type="pathway name" value="Glycogen breakdown (glycogenolysis)"/>
</dbReference>
<dbReference type="SignaLink" id="P15735"/>
<dbReference type="SIGNOR" id="P15735"/>
<dbReference type="BioGRID-ORCS" id="5261">
    <property type="hits" value="9 hits in 1201 CRISPR screens"/>
</dbReference>
<dbReference type="ChiTaRS" id="PHKG2">
    <property type="organism name" value="human"/>
</dbReference>
<dbReference type="EvolutionaryTrace" id="P15735"/>
<dbReference type="GeneWiki" id="PHKG2"/>
<dbReference type="GenomeRNAi" id="5261"/>
<dbReference type="Pharos" id="P15735">
    <property type="development level" value="Tchem"/>
</dbReference>
<dbReference type="PRO" id="PR:P15735"/>
<dbReference type="Proteomes" id="UP000005640">
    <property type="component" value="Chromosome 16"/>
</dbReference>
<dbReference type="RNAct" id="P15735">
    <property type="molecule type" value="protein"/>
</dbReference>
<dbReference type="Bgee" id="ENSG00000156873">
    <property type="expression patterns" value="Expressed in left testis and 129 other cell types or tissues"/>
</dbReference>
<dbReference type="ExpressionAtlas" id="P15735">
    <property type="expression patterns" value="baseline and differential"/>
</dbReference>
<dbReference type="GO" id="GO:0005737">
    <property type="term" value="C:cytoplasm"/>
    <property type="evidence" value="ECO:0000318"/>
    <property type="project" value="GO_Central"/>
</dbReference>
<dbReference type="GO" id="GO:0005829">
    <property type="term" value="C:cytosol"/>
    <property type="evidence" value="ECO:0000314"/>
    <property type="project" value="HPA"/>
</dbReference>
<dbReference type="GO" id="GO:0005964">
    <property type="term" value="C:phosphorylase kinase complex"/>
    <property type="evidence" value="ECO:0000318"/>
    <property type="project" value="GO_Central"/>
</dbReference>
<dbReference type="GO" id="GO:0005524">
    <property type="term" value="F:ATP binding"/>
    <property type="evidence" value="ECO:0007669"/>
    <property type="project" value="UniProtKB-KW"/>
</dbReference>
<dbReference type="GO" id="GO:0005516">
    <property type="term" value="F:calmodulin binding"/>
    <property type="evidence" value="ECO:0007669"/>
    <property type="project" value="UniProtKB-KW"/>
</dbReference>
<dbReference type="GO" id="GO:0019899">
    <property type="term" value="F:enzyme binding"/>
    <property type="evidence" value="ECO:0007669"/>
    <property type="project" value="Ensembl"/>
</dbReference>
<dbReference type="GO" id="GO:0004689">
    <property type="term" value="F:phosphorylase kinase activity"/>
    <property type="evidence" value="ECO:0000318"/>
    <property type="project" value="GO_Central"/>
</dbReference>
<dbReference type="GO" id="GO:0004674">
    <property type="term" value="F:protein serine/threonine kinase activity"/>
    <property type="evidence" value="ECO:0000304"/>
    <property type="project" value="UniProtKB"/>
</dbReference>
<dbReference type="GO" id="GO:0050321">
    <property type="term" value="F:tau-protein kinase activity"/>
    <property type="evidence" value="ECO:0000304"/>
    <property type="project" value="UniProtKB"/>
</dbReference>
<dbReference type="GO" id="GO:0006091">
    <property type="term" value="P:generation of precursor metabolites and energy"/>
    <property type="evidence" value="ECO:0000304"/>
    <property type="project" value="ProtInc"/>
</dbReference>
<dbReference type="GO" id="GO:0005980">
    <property type="term" value="P:glycogen catabolic process"/>
    <property type="evidence" value="ECO:0007669"/>
    <property type="project" value="Ensembl"/>
</dbReference>
<dbReference type="GO" id="GO:0005977">
    <property type="term" value="P:glycogen metabolic process"/>
    <property type="evidence" value="ECO:0000318"/>
    <property type="project" value="GO_Central"/>
</dbReference>
<dbReference type="GO" id="GO:0045819">
    <property type="term" value="P:positive regulation of glycogen catabolic process"/>
    <property type="evidence" value="ECO:0000304"/>
    <property type="project" value="UniProtKB"/>
</dbReference>
<dbReference type="GO" id="GO:0006468">
    <property type="term" value="P:protein phosphorylation"/>
    <property type="evidence" value="ECO:0000304"/>
    <property type="project" value="ProtInc"/>
</dbReference>
<dbReference type="GO" id="GO:0007165">
    <property type="term" value="P:signal transduction"/>
    <property type="evidence" value="ECO:0000318"/>
    <property type="project" value="GO_Central"/>
</dbReference>
<dbReference type="CDD" id="cd14181">
    <property type="entry name" value="STKc_PhKG2"/>
    <property type="match status" value="1"/>
</dbReference>
<dbReference type="FunFam" id="3.30.200.20:FF:000138">
    <property type="entry name" value="Phosphorylase b kinase gamma catalytic chain, liver/testis"/>
    <property type="match status" value="1"/>
</dbReference>
<dbReference type="FunFam" id="1.10.510.10:FF:000149">
    <property type="entry name" value="phosphorylase b kinase gamma catalytic chain, liver/testis isoform"/>
    <property type="match status" value="1"/>
</dbReference>
<dbReference type="Gene3D" id="3.30.200.20">
    <property type="entry name" value="Phosphorylase Kinase, domain 1"/>
    <property type="match status" value="1"/>
</dbReference>
<dbReference type="Gene3D" id="1.10.510.10">
    <property type="entry name" value="Transferase(Phosphotransferase) domain 1"/>
    <property type="match status" value="1"/>
</dbReference>
<dbReference type="InterPro" id="IPR011009">
    <property type="entry name" value="Kinase-like_dom_sf"/>
</dbReference>
<dbReference type="InterPro" id="IPR002291">
    <property type="entry name" value="Phosph_kin_gamma"/>
</dbReference>
<dbReference type="InterPro" id="IPR000719">
    <property type="entry name" value="Prot_kinase_dom"/>
</dbReference>
<dbReference type="InterPro" id="IPR017441">
    <property type="entry name" value="Protein_kinase_ATP_BS"/>
</dbReference>
<dbReference type="InterPro" id="IPR008271">
    <property type="entry name" value="Ser/Thr_kinase_AS"/>
</dbReference>
<dbReference type="PANTHER" id="PTHR24347">
    <property type="entry name" value="SERINE/THREONINE-PROTEIN KINASE"/>
    <property type="match status" value="1"/>
</dbReference>
<dbReference type="Pfam" id="PF00069">
    <property type="entry name" value="Pkinase"/>
    <property type="match status" value="1"/>
</dbReference>
<dbReference type="PRINTS" id="PR01049">
    <property type="entry name" value="PHOSPHBKNASE"/>
</dbReference>
<dbReference type="SMART" id="SM00220">
    <property type="entry name" value="S_TKc"/>
    <property type="match status" value="1"/>
</dbReference>
<dbReference type="SUPFAM" id="SSF56112">
    <property type="entry name" value="Protein kinase-like (PK-like)"/>
    <property type="match status" value="1"/>
</dbReference>
<dbReference type="PROSITE" id="PS00107">
    <property type="entry name" value="PROTEIN_KINASE_ATP"/>
    <property type="match status" value="1"/>
</dbReference>
<dbReference type="PROSITE" id="PS50011">
    <property type="entry name" value="PROTEIN_KINASE_DOM"/>
    <property type="match status" value="1"/>
</dbReference>
<dbReference type="PROSITE" id="PS00108">
    <property type="entry name" value="PROTEIN_KINASE_ST"/>
    <property type="match status" value="1"/>
</dbReference>
<comment type="function">
    <text evidence="2 5 8">Catalytic subunit of the phosphorylase b kinase (PHK), which mediates the neural and hormonal regulation of glycogen breakdown (glycogenolysis) by phosphorylating and thereby activating glycogen phosphorylase. May regulate glycogeneolysis in the testis. In vitro, phosphorylates PYGM (PubMed:35549678).</text>
</comment>
<comment type="catalytic activity">
    <reaction evidence="8">
        <text>2 ATP + phosphorylase b = 2 ADP + phosphorylase a.</text>
        <dbReference type="EC" id="2.7.11.19"/>
    </reaction>
</comment>
<comment type="subunit">
    <text evidence="11">Hexadecamer of 4 heterotetramers, each composed of alpha, beta, gamma, and delta subunits. Alpha (PHKA1 or PHKA2) and beta (PHKB) are regulatory subunits, gamma (PHKG1 or PHKG2) is the catalytic subunit, and delta is calmodulin.</text>
</comment>
<comment type="interaction">
    <interactant intactId="EBI-1383819">
        <id>P15735</id>
    </interactant>
    <interactant intactId="EBI-5650739">
        <id>P43356</id>
        <label>MAGEA2B</label>
    </interactant>
    <organismsDiffer>false</organismsDiffer>
    <experiments>3</experiments>
</comment>
<comment type="interaction">
    <interactant intactId="EBI-1383819">
        <id>P15735</id>
    </interactant>
    <interactant intactId="EBI-1642846">
        <id>P46019</id>
        <label>PHKA2</label>
    </interactant>
    <organismsDiffer>false</organismsDiffer>
    <experiments>10</experiments>
</comment>
<comment type="alternative products">
    <event type="alternative splicing"/>
    <isoform>
        <id>P15735-1</id>
        <name>1</name>
        <sequence type="displayed"/>
    </isoform>
    <isoform>
        <id>P15735-2</id>
        <name>2</name>
        <sequence type="described" ref="VSP_041858 VSP_041859"/>
    </isoform>
</comment>
<comment type="disease" evidence="6 8 9 10">
    <disease id="DI-00530">
        <name>Glycogen storage disease 9C</name>
        <acronym>GSD9C</acronym>
        <description>A metabolic disorder manifesting in infancy with hepatomegaly, growth retardation, hypotonia, liver dysfunction, and elevated plasma aminotransferases and lipids. These symptoms improve with age in most cases; however, some patients may develop hepatic fibrosis or cirrhosis.</description>
        <dbReference type="MIM" id="613027"/>
    </disease>
    <text>The disease is caused by variants affecting the gene represented in this entry.</text>
</comment>
<comment type="similarity">
    <text evidence="13">Belongs to the protein kinase superfamily. CAMK Ser/Thr protein kinase family.</text>
</comment>
<feature type="chain" id="PRO_0000086512" description="Phosphorylase b kinase gamma catalytic chain, liver/testis isoform">
    <location>
        <begin position="1"/>
        <end position="406"/>
    </location>
</feature>
<feature type="domain" description="Protein kinase" evidence="3">
    <location>
        <begin position="24"/>
        <end position="291"/>
    </location>
</feature>
<feature type="region of interest" description="Calmodulin-binding (domain-N)" evidence="1">
    <location>
        <begin position="306"/>
        <end position="330"/>
    </location>
</feature>
<feature type="region of interest" description="Calmodulin-binding (domain-C)" evidence="1">
    <location>
        <begin position="346"/>
        <end position="370"/>
    </location>
</feature>
<feature type="active site" description="Proton acceptor" evidence="3 4">
    <location>
        <position position="153"/>
    </location>
</feature>
<feature type="binding site" evidence="3">
    <location>
        <begin position="30"/>
        <end position="38"/>
    </location>
    <ligand>
        <name>ATP</name>
        <dbReference type="ChEBI" id="CHEBI:30616"/>
    </ligand>
</feature>
<feature type="binding site" evidence="3">
    <location>
        <position position="53"/>
    </location>
    <ligand>
        <name>ATP</name>
        <dbReference type="ChEBI" id="CHEBI:30616"/>
    </ligand>
</feature>
<feature type="modified residue" description="Phosphoserine" evidence="14">
    <location>
        <position position="345"/>
    </location>
</feature>
<feature type="splice variant" id="VSP_041858" description="In isoform 2." evidence="12">
    <original>VKKGEQQNRAALF</original>
    <variation>IRKQWIGKLMACV</variation>
    <location>
        <begin position="362"/>
        <end position="374"/>
    </location>
</feature>
<feature type="splice variant" id="VSP_041859" description="In isoform 2." evidence="12">
    <location>
        <begin position="375"/>
        <end position="406"/>
    </location>
</feature>
<feature type="sequence variant" id="VAR_009517" description="In GSD9C; dbSNP:rs137853589." evidence="9">
    <original>V</original>
    <variation>E</variation>
    <location>
        <position position="106"/>
    </location>
</feature>
<feature type="sequence variant" id="VAR_020854" description="In GSD9C; dbSNP:rs752961445." evidence="6">
    <original>E</original>
    <variation>K</variation>
    <location>
        <position position="157"/>
    </location>
</feature>
<feature type="sequence variant" id="VAR_009518" description="In GSD9C; dbSNP:rs137853588." evidence="9">
    <original>G</original>
    <variation>E</variation>
    <location>
        <position position="189"/>
    </location>
</feature>
<feature type="sequence variant" id="VAR_020855" description="In GSD9C; decrease in phosphorylase b kinase activity; dbSNP:rs767427889." evidence="6 8">
    <original>D</original>
    <variation>N</variation>
    <location>
        <position position="215"/>
    </location>
</feature>
<feature type="sequence variant" id="VAR_089697" description="In GSD9C; decrease in phosphorylase b kinase activity; dbSNP:rs2053427702." evidence="8">
    <original>F</original>
    <variation>S</variation>
    <location>
        <position position="233"/>
    </location>
</feature>
<feature type="sequence variant" id="VAR_051658" description="In dbSNP:rs34006569.">
    <original>E</original>
    <variation>G</variation>
    <location>
        <position position="247"/>
    </location>
</feature>
<feature type="sequence variant" id="VAR_089698" description="No impact on phosphorylase b kinase activity; dbSNP:rs368436227." evidence="8">
    <original>S</original>
    <variation>G</variation>
    <location>
        <position position="253"/>
    </location>
</feature>
<feature type="sequence variant" id="VAR_040996" description="In dbSNP:rs759992249." evidence="7">
    <original>A</original>
    <variation>T</variation>
    <location>
        <position position="317"/>
    </location>
</feature>
<feature type="sequence conflict" description="In Ref. 6; AAA36518." evidence="13" ref="6">
    <original>A</original>
    <variation>P</variation>
    <location>
        <position position="146"/>
    </location>
</feature>
<feature type="sequence conflict" description="In Ref. 6; AAA36518." evidence="13" ref="6">
    <original>C</original>
    <variation>S</variation>
    <location>
        <position position="176"/>
    </location>
</feature>
<feature type="sequence conflict" description="In Ref. 6; AAA36518." evidence="13" ref="6">
    <original>E</original>
    <variation>D</variation>
    <location>
        <position position="179"/>
    </location>
</feature>
<feature type="sequence conflict" description="In Ref. 6; AAA36518." evidence="13" ref="6">
    <original>KEV</original>
    <variation>LVD</variation>
    <location>
        <begin position="212"/>
        <end position="214"/>
    </location>
</feature>
<feature type="sequence conflict" description="In Ref. 6; AAA36518." evidence="13" ref="6">
    <original>V</original>
    <variation>E</variation>
    <location>
        <position position="221"/>
    </location>
</feature>
<feature type="helix" evidence="15">
    <location>
        <begin position="13"/>
        <end position="23"/>
    </location>
</feature>
<feature type="strand" evidence="15">
    <location>
        <begin position="24"/>
        <end position="32"/>
    </location>
</feature>
<feature type="strand" evidence="15">
    <location>
        <begin position="34"/>
        <end position="43"/>
    </location>
</feature>
<feature type="turn" evidence="15">
    <location>
        <begin position="44"/>
        <end position="46"/>
    </location>
</feature>
<feature type="strand" evidence="15">
    <location>
        <begin position="49"/>
        <end position="56"/>
    </location>
</feature>
<feature type="helix" evidence="15">
    <location>
        <begin position="64"/>
        <end position="84"/>
    </location>
</feature>
<feature type="strand" evidence="15">
    <location>
        <begin position="93"/>
        <end position="107"/>
    </location>
</feature>
<feature type="helix" evidence="15">
    <location>
        <begin position="115"/>
        <end position="122"/>
    </location>
</feature>
<feature type="helix" evidence="15">
    <location>
        <begin position="127"/>
        <end position="146"/>
    </location>
</feature>
<feature type="helix" evidence="15">
    <location>
        <begin position="156"/>
        <end position="158"/>
    </location>
</feature>
<feature type="strand" evidence="15">
    <location>
        <begin position="159"/>
        <end position="161"/>
    </location>
</feature>
<feature type="strand" evidence="15">
    <location>
        <begin position="167"/>
        <end position="169"/>
    </location>
</feature>
<feature type="helix" evidence="15">
    <location>
        <begin position="191"/>
        <end position="193"/>
    </location>
</feature>
<feature type="helix" evidence="15">
    <location>
        <begin position="196"/>
        <end position="201"/>
    </location>
</feature>
<feature type="helix" evidence="15">
    <location>
        <begin position="214"/>
        <end position="228"/>
    </location>
</feature>
<feature type="helix" evidence="15">
    <location>
        <begin position="238"/>
        <end position="247"/>
    </location>
</feature>
<feature type="helix" evidence="15">
    <location>
        <begin position="254"/>
        <end position="257"/>
    </location>
</feature>
<feature type="strand" evidence="15">
    <location>
        <begin position="258"/>
        <end position="260"/>
    </location>
</feature>
<feature type="helix" evidence="15">
    <location>
        <begin position="262"/>
        <end position="271"/>
    </location>
</feature>
<feature type="turn" evidence="15">
    <location>
        <begin position="276"/>
        <end position="278"/>
    </location>
</feature>
<feature type="helix" evidence="15">
    <location>
        <begin position="282"/>
        <end position="287"/>
    </location>
</feature>
<feature type="helix" evidence="15">
    <location>
        <begin position="289"/>
        <end position="291"/>
    </location>
</feature>
<proteinExistence type="evidence at protein level"/>
<accession>P15735</accession>
<accession>A8K0C7</accession>
<accession>B4DEB7</accession>
<accession>E9PEU3</accession>
<accession>P11800</accession>
<evidence type="ECO:0000250" key="1"/>
<evidence type="ECO:0000250" key="2">
    <source>
        <dbReference type="UniProtKB" id="P31325"/>
    </source>
</evidence>
<evidence type="ECO:0000255" key="3">
    <source>
        <dbReference type="PROSITE-ProRule" id="PRU00159"/>
    </source>
</evidence>
<evidence type="ECO:0000255" key="4">
    <source>
        <dbReference type="PROSITE-ProRule" id="PRU10027"/>
    </source>
</evidence>
<evidence type="ECO:0000269" key="5">
    <source>
    </source>
</evidence>
<evidence type="ECO:0000269" key="6">
    <source>
    </source>
</evidence>
<evidence type="ECO:0000269" key="7">
    <source>
    </source>
</evidence>
<evidence type="ECO:0000269" key="8">
    <source>
    </source>
</evidence>
<evidence type="ECO:0000269" key="9">
    <source>
    </source>
</evidence>
<evidence type="ECO:0000269" key="10">
    <source>
    </source>
</evidence>
<evidence type="ECO:0000269" key="11">
    <source ref="12"/>
</evidence>
<evidence type="ECO:0000303" key="12">
    <source>
    </source>
</evidence>
<evidence type="ECO:0000305" key="13"/>
<evidence type="ECO:0007744" key="14">
    <source>
    </source>
</evidence>
<evidence type="ECO:0007829" key="15">
    <source>
        <dbReference type="PDB" id="2Y7J"/>
    </source>
</evidence>